<keyword id="KW-1185">Reference proteome</keyword>
<proteinExistence type="inferred from homology"/>
<accession>A8MGH9</accession>
<gene>
    <name type="ordered locus">Clos_1662</name>
</gene>
<organism>
    <name type="scientific">Alkaliphilus oremlandii (strain OhILAs)</name>
    <name type="common">Clostridium oremlandii (strain OhILAs)</name>
    <dbReference type="NCBI Taxonomy" id="350688"/>
    <lineage>
        <taxon>Bacteria</taxon>
        <taxon>Bacillati</taxon>
        <taxon>Bacillota</taxon>
        <taxon>Clostridia</taxon>
        <taxon>Peptostreptococcales</taxon>
        <taxon>Natronincolaceae</taxon>
        <taxon>Alkaliphilus</taxon>
    </lineage>
</organism>
<feature type="chain" id="PRO_1000068577" description="UPF0473 protein Clos_1662">
    <location>
        <begin position="1"/>
        <end position="86"/>
    </location>
</feature>
<evidence type="ECO:0000255" key="1">
    <source>
        <dbReference type="HAMAP-Rule" id="MF_01448"/>
    </source>
</evidence>
<reference key="1">
    <citation type="submission" date="2007-10" db="EMBL/GenBank/DDBJ databases">
        <title>Complete genome of Alkaliphilus oremlandii OhILAs.</title>
        <authorList>
            <person name="Copeland A."/>
            <person name="Lucas S."/>
            <person name="Lapidus A."/>
            <person name="Barry K."/>
            <person name="Detter J.C."/>
            <person name="Glavina del Rio T."/>
            <person name="Hammon N."/>
            <person name="Israni S."/>
            <person name="Dalin E."/>
            <person name="Tice H."/>
            <person name="Pitluck S."/>
            <person name="Chain P."/>
            <person name="Malfatti S."/>
            <person name="Shin M."/>
            <person name="Vergez L."/>
            <person name="Schmutz J."/>
            <person name="Larimer F."/>
            <person name="Land M."/>
            <person name="Hauser L."/>
            <person name="Kyrpides N."/>
            <person name="Mikhailova N."/>
            <person name="Stolz J.F."/>
            <person name="Dawson A."/>
            <person name="Fisher E."/>
            <person name="Crable B."/>
            <person name="Perera E."/>
            <person name="Lisak J."/>
            <person name="Ranganathan M."/>
            <person name="Basu P."/>
            <person name="Richardson P."/>
        </authorList>
    </citation>
    <scope>NUCLEOTIDE SEQUENCE [LARGE SCALE GENOMIC DNA]</scope>
    <source>
        <strain>OhILAs</strain>
    </source>
</reference>
<name>Y1662_ALKOO</name>
<protein>
    <recommendedName>
        <fullName evidence="1">UPF0473 protein Clos_1662</fullName>
    </recommendedName>
</protein>
<sequence>MEERDDIITLLDEEGKEQDFEVIMTLEVEGNEYAILAPVDSDEDEDAYVFKIVYENEDEYSLVTIEDDEEYDNVVAAYETLMDEEM</sequence>
<dbReference type="EMBL" id="CP000853">
    <property type="protein sequence ID" value="ABW19202.1"/>
    <property type="molecule type" value="Genomic_DNA"/>
</dbReference>
<dbReference type="RefSeq" id="WP_012159514.1">
    <property type="nucleotide sequence ID" value="NC_009922.1"/>
</dbReference>
<dbReference type="STRING" id="350688.Clos_1662"/>
<dbReference type="KEGG" id="aoe:Clos_1662"/>
<dbReference type="eggNOG" id="COG3906">
    <property type="taxonomic scope" value="Bacteria"/>
</dbReference>
<dbReference type="HOGENOM" id="CLU_146610_8_0_9"/>
<dbReference type="OrthoDB" id="9811971at2"/>
<dbReference type="Proteomes" id="UP000000269">
    <property type="component" value="Chromosome"/>
</dbReference>
<dbReference type="HAMAP" id="MF_01448">
    <property type="entry name" value="UPF0473"/>
    <property type="match status" value="1"/>
</dbReference>
<dbReference type="InterPro" id="IPR009711">
    <property type="entry name" value="UPF0473"/>
</dbReference>
<dbReference type="PANTHER" id="PTHR40066">
    <property type="entry name" value="UPF0473 PROTEIN CBO2561/CLC_2432"/>
    <property type="match status" value="1"/>
</dbReference>
<dbReference type="PANTHER" id="PTHR40066:SF1">
    <property type="entry name" value="UPF0473 PROTEIN CBO2561_CLC_2432"/>
    <property type="match status" value="1"/>
</dbReference>
<dbReference type="Pfam" id="PF06949">
    <property type="entry name" value="DUF1292"/>
    <property type="match status" value="1"/>
</dbReference>
<comment type="similarity">
    <text evidence="1">Belongs to the UPF0473 family.</text>
</comment>